<reference key="1">
    <citation type="journal article" date="1994" name="Gene">
        <title>Characterisation of the urease-encoding gene complex of Yersinia enterocolitica.</title>
        <authorList>
            <person name="de Koning-Ward T.F."/>
            <person name="Ward A.C."/>
            <person name="Robins-Browne R.M."/>
        </authorList>
    </citation>
    <scope>NUCLEOTIDE SEQUENCE [GENOMIC DNA]</scope>
    <source>
        <strain>A2635 / Serotype O:8</strain>
    </source>
</reference>
<reference key="2">
    <citation type="journal article" date="1995" name="Infect. Immun.">
        <title>Contribution of urease to acid tolerance in Yersinia enterocolitica.</title>
        <authorList>
            <person name="de Koning-Ward T.F."/>
            <person name="Robins-Browne R.M."/>
        </authorList>
    </citation>
    <scope>ROLE IN VIRULENCE</scope>
    <source>
        <strain>W22703 / Serogroup O:9</strain>
    </source>
</reference>
<keyword id="KW-0143">Chaperone</keyword>
<keyword id="KW-0963">Cytoplasm</keyword>
<keyword id="KW-0996">Nickel insertion</keyword>
<keyword id="KW-0843">Virulence</keyword>
<organism>
    <name type="scientific">Yersinia enterocolitica</name>
    <dbReference type="NCBI Taxonomy" id="630"/>
    <lineage>
        <taxon>Bacteria</taxon>
        <taxon>Pseudomonadati</taxon>
        <taxon>Pseudomonadota</taxon>
        <taxon>Gammaproteobacteria</taxon>
        <taxon>Enterobacterales</taxon>
        <taxon>Yersiniaceae</taxon>
        <taxon>Yersinia</taxon>
    </lineage>
</organism>
<protein>
    <recommendedName>
        <fullName evidence="1">Urease accessory protein UreF</fullName>
    </recommendedName>
</protein>
<gene>
    <name evidence="1" type="primary">ureF</name>
</gene>
<name>UREF_YEREN</name>
<feature type="chain" id="PRO_0000067657" description="Urease accessory protein UreF">
    <location>
        <begin position="1"/>
        <end position="228"/>
    </location>
</feature>
<accession>P42870</accession>
<sequence>MNASDLIRIMQFGDSVLPVGAFTFSNGVESAIQTGVVRDVPTLKGFVLTALKQAASCDGMGVVAAHRAVVADDRDGIIRADWAVNNRKLNEESRLMATRMGKKLAEMSIHVVEHPLISWWLEQIKNGNTAGTYPVTQAVVMAAQGIGQREVVVMHQYGVAMTILSAAMRLMRVTHFDTQHILFELNHDIEKFCDIAEIGDIDQMSSYVPIVDVLAAVHVKAHVRLFSN</sequence>
<dbReference type="EMBL" id="L24101">
    <property type="protein sequence ID" value="AAA50998.1"/>
    <property type="molecule type" value="Genomic_DNA"/>
</dbReference>
<dbReference type="RefSeq" id="WP_005164256.1">
    <property type="nucleotide sequence ID" value="NZ_WJHZ01000053.1"/>
</dbReference>
<dbReference type="SMR" id="P42870"/>
<dbReference type="OMA" id="FIRYETH"/>
<dbReference type="GO" id="GO:0005737">
    <property type="term" value="C:cytoplasm"/>
    <property type="evidence" value="ECO:0007669"/>
    <property type="project" value="UniProtKB-SubCell"/>
</dbReference>
<dbReference type="GO" id="GO:0016151">
    <property type="term" value="F:nickel cation binding"/>
    <property type="evidence" value="ECO:0007669"/>
    <property type="project" value="UniProtKB-UniRule"/>
</dbReference>
<dbReference type="Gene3D" id="1.10.4190.10">
    <property type="entry name" value="Urease accessory protein UreF"/>
    <property type="match status" value="1"/>
</dbReference>
<dbReference type="HAMAP" id="MF_01385">
    <property type="entry name" value="UreF"/>
    <property type="match status" value="1"/>
</dbReference>
<dbReference type="InterPro" id="IPR002639">
    <property type="entry name" value="UreF"/>
</dbReference>
<dbReference type="InterPro" id="IPR038277">
    <property type="entry name" value="UreF_sf"/>
</dbReference>
<dbReference type="PANTHER" id="PTHR33620">
    <property type="entry name" value="UREASE ACCESSORY PROTEIN F"/>
    <property type="match status" value="1"/>
</dbReference>
<dbReference type="PANTHER" id="PTHR33620:SF1">
    <property type="entry name" value="UREASE ACCESSORY PROTEIN F"/>
    <property type="match status" value="1"/>
</dbReference>
<dbReference type="Pfam" id="PF01730">
    <property type="entry name" value="UreF"/>
    <property type="match status" value="1"/>
</dbReference>
<dbReference type="PIRSF" id="PIRSF009467">
    <property type="entry name" value="Ureas_acces_UreF"/>
    <property type="match status" value="1"/>
</dbReference>
<evidence type="ECO:0000255" key="1">
    <source>
        <dbReference type="HAMAP-Rule" id="MF_01385"/>
    </source>
</evidence>
<evidence type="ECO:0000269" key="2">
    <source>
    </source>
</evidence>
<comment type="function">
    <text evidence="1">Required for maturation of urease via the functional incorporation of the urease nickel metallocenter.</text>
</comment>
<comment type="function">
    <text evidence="2">Expression of the urease operon increases the likelihood of bacterial survival by contributing to acid resistance in vitro and in vivo in BALB/c mice. Y.enterocolitica enters the body via an oral path and must survive the acidic stomach before being able to colonize the intestinal mucosa (PubMed:7558281).</text>
</comment>
<comment type="subunit">
    <text evidence="1">UreD, UreF and UreG form a complex that acts as a GTP-hydrolysis-dependent molecular chaperone, activating the urease apoprotein by helping to assemble the nickel containing metallocenter of UreC. The UreE protein probably delivers the nickel.</text>
</comment>
<comment type="subcellular location">
    <subcellularLocation>
        <location evidence="1">Cytoplasm</location>
    </subcellularLocation>
</comment>
<comment type="similarity">
    <text evidence="1">Belongs to the UreF family.</text>
</comment>
<proteinExistence type="inferred from homology"/>